<proteinExistence type="inferred from homology"/>
<name>RS19_ORITB</name>
<reference key="1">
    <citation type="journal article" date="2007" name="Proc. Natl. Acad. Sci. U.S.A.">
        <title>The Orientia tsutsugamushi genome reveals massive proliferation of conjugative type IV secretion system and host-cell interaction genes.</title>
        <authorList>
            <person name="Cho N.-H."/>
            <person name="Kim H.-R."/>
            <person name="Lee J.-H."/>
            <person name="Kim S.-Y."/>
            <person name="Kim J."/>
            <person name="Cha S."/>
            <person name="Kim S.-Y."/>
            <person name="Darby A.C."/>
            <person name="Fuxelius H.-H."/>
            <person name="Yin J."/>
            <person name="Kim J.H."/>
            <person name="Kim J."/>
            <person name="Lee S.J."/>
            <person name="Koh Y.-S."/>
            <person name="Jang W.-J."/>
            <person name="Park K.-H."/>
            <person name="Andersson S.G.E."/>
            <person name="Choi M.-S."/>
            <person name="Kim I.-S."/>
        </authorList>
    </citation>
    <scope>NUCLEOTIDE SEQUENCE [LARGE SCALE GENOMIC DNA]</scope>
    <source>
        <strain>Boryong</strain>
    </source>
</reference>
<evidence type="ECO:0000255" key="1">
    <source>
        <dbReference type="HAMAP-Rule" id="MF_00531"/>
    </source>
</evidence>
<evidence type="ECO:0000305" key="2"/>
<comment type="function">
    <text evidence="1">Protein S19 forms a complex with S13 that binds strongly to the 16S ribosomal RNA.</text>
</comment>
<comment type="similarity">
    <text evidence="1">Belongs to the universal ribosomal protein uS19 family.</text>
</comment>
<sequence length="92" mass="10532">MARSIWKGPFVRESLIKKVNKLIESGKSSVIKTWSRESAIIPLFVRFVFAVHNGNKFIPVVITEEMVGRKLGEFAPTRTFYGHAADRKVKRK</sequence>
<keyword id="KW-1185">Reference proteome</keyword>
<keyword id="KW-0687">Ribonucleoprotein</keyword>
<keyword id="KW-0689">Ribosomal protein</keyword>
<keyword id="KW-0694">RNA-binding</keyword>
<keyword id="KW-0699">rRNA-binding</keyword>
<feature type="chain" id="PRO_1000051091" description="Small ribosomal subunit protein uS19">
    <location>
        <begin position="1"/>
        <end position="92"/>
    </location>
</feature>
<protein>
    <recommendedName>
        <fullName evidence="1">Small ribosomal subunit protein uS19</fullName>
    </recommendedName>
    <alternativeName>
        <fullName evidence="2">30S ribosomal protein S19</fullName>
    </alternativeName>
</protein>
<accession>A5CCK8</accession>
<organism>
    <name type="scientific">Orientia tsutsugamushi (strain Boryong)</name>
    <name type="common">Rickettsia tsutsugamushi</name>
    <dbReference type="NCBI Taxonomy" id="357244"/>
    <lineage>
        <taxon>Bacteria</taxon>
        <taxon>Pseudomonadati</taxon>
        <taxon>Pseudomonadota</taxon>
        <taxon>Alphaproteobacteria</taxon>
        <taxon>Rickettsiales</taxon>
        <taxon>Rickettsiaceae</taxon>
        <taxon>Rickettsieae</taxon>
        <taxon>Orientia</taxon>
    </lineage>
</organism>
<gene>
    <name evidence="1" type="primary">rpsS</name>
    <name type="ordered locus">OTBS_0372</name>
</gene>
<dbReference type="EMBL" id="AM494475">
    <property type="protein sequence ID" value="CAM79438.1"/>
    <property type="molecule type" value="Genomic_DNA"/>
</dbReference>
<dbReference type="RefSeq" id="WP_011944436.1">
    <property type="nucleotide sequence ID" value="NC_009488.1"/>
</dbReference>
<dbReference type="SMR" id="A5CCK8"/>
<dbReference type="GeneID" id="89459053"/>
<dbReference type="KEGG" id="ots:OTBS_0372"/>
<dbReference type="eggNOG" id="COG0185">
    <property type="taxonomic scope" value="Bacteria"/>
</dbReference>
<dbReference type="HOGENOM" id="CLU_144911_0_1_5"/>
<dbReference type="Proteomes" id="UP000001565">
    <property type="component" value="Chromosome"/>
</dbReference>
<dbReference type="GO" id="GO:0005737">
    <property type="term" value="C:cytoplasm"/>
    <property type="evidence" value="ECO:0007669"/>
    <property type="project" value="UniProtKB-ARBA"/>
</dbReference>
<dbReference type="GO" id="GO:0015935">
    <property type="term" value="C:small ribosomal subunit"/>
    <property type="evidence" value="ECO:0007669"/>
    <property type="project" value="InterPro"/>
</dbReference>
<dbReference type="GO" id="GO:0019843">
    <property type="term" value="F:rRNA binding"/>
    <property type="evidence" value="ECO:0007669"/>
    <property type="project" value="UniProtKB-UniRule"/>
</dbReference>
<dbReference type="GO" id="GO:0003735">
    <property type="term" value="F:structural constituent of ribosome"/>
    <property type="evidence" value="ECO:0007669"/>
    <property type="project" value="InterPro"/>
</dbReference>
<dbReference type="GO" id="GO:0000028">
    <property type="term" value="P:ribosomal small subunit assembly"/>
    <property type="evidence" value="ECO:0007669"/>
    <property type="project" value="TreeGrafter"/>
</dbReference>
<dbReference type="GO" id="GO:0006412">
    <property type="term" value="P:translation"/>
    <property type="evidence" value="ECO:0007669"/>
    <property type="project" value="UniProtKB-UniRule"/>
</dbReference>
<dbReference type="FunFam" id="3.30.860.10:FF:000001">
    <property type="entry name" value="30S ribosomal protein S19"/>
    <property type="match status" value="1"/>
</dbReference>
<dbReference type="Gene3D" id="3.30.860.10">
    <property type="entry name" value="30s Ribosomal Protein S19, Chain A"/>
    <property type="match status" value="1"/>
</dbReference>
<dbReference type="HAMAP" id="MF_00531">
    <property type="entry name" value="Ribosomal_uS19"/>
    <property type="match status" value="1"/>
</dbReference>
<dbReference type="InterPro" id="IPR002222">
    <property type="entry name" value="Ribosomal_uS19"/>
</dbReference>
<dbReference type="InterPro" id="IPR005732">
    <property type="entry name" value="Ribosomal_uS19_bac-type"/>
</dbReference>
<dbReference type="InterPro" id="IPR020934">
    <property type="entry name" value="Ribosomal_uS19_CS"/>
</dbReference>
<dbReference type="InterPro" id="IPR023575">
    <property type="entry name" value="Ribosomal_uS19_SF"/>
</dbReference>
<dbReference type="NCBIfam" id="TIGR01050">
    <property type="entry name" value="rpsS_bact"/>
    <property type="match status" value="1"/>
</dbReference>
<dbReference type="PANTHER" id="PTHR11880">
    <property type="entry name" value="RIBOSOMAL PROTEIN S19P FAMILY MEMBER"/>
    <property type="match status" value="1"/>
</dbReference>
<dbReference type="PANTHER" id="PTHR11880:SF8">
    <property type="entry name" value="SMALL RIBOSOMAL SUBUNIT PROTEIN US19M"/>
    <property type="match status" value="1"/>
</dbReference>
<dbReference type="Pfam" id="PF00203">
    <property type="entry name" value="Ribosomal_S19"/>
    <property type="match status" value="1"/>
</dbReference>
<dbReference type="PIRSF" id="PIRSF002144">
    <property type="entry name" value="Ribosomal_S19"/>
    <property type="match status" value="1"/>
</dbReference>
<dbReference type="PRINTS" id="PR00975">
    <property type="entry name" value="RIBOSOMALS19"/>
</dbReference>
<dbReference type="SUPFAM" id="SSF54570">
    <property type="entry name" value="Ribosomal protein S19"/>
    <property type="match status" value="1"/>
</dbReference>
<dbReference type="PROSITE" id="PS00323">
    <property type="entry name" value="RIBOSOMAL_S19"/>
    <property type="match status" value="1"/>
</dbReference>